<protein>
    <recommendedName>
        <fullName>Putative O-methyltransferase MUL_4520</fullName>
        <ecNumber>2.1.1.-</ecNumber>
    </recommendedName>
</protein>
<dbReference type="EC" id="2.1.1.-"/>
<dbReference type="EMBL" id="CP000325">
    <property type="protein sequence ID" value="ABL06483.1"/>
    <property type="molecule type" value="Genomic_DNA"/>
</dbReference>
<dbReference type="RefSeq" id="WP_011742082.1">
    <property type="nucleotide sequence ID" value="NC_008611.1"/>
</dbReference>
<dbReference type="SMR" id="A0PVW4"/>
<dbReference type="KEGG" id="mul:MUL_4520"/>
<dbReference type="eggNOG" id="COG4122">
    <property type="taxonomic scope" value="Bacteria"/>
</dbReference>
<dbReference type="HOGENOM" id="CLU_067676_2_0_11"/>
<dbReference type="Proteomes" id="UP000000765">
    <property type="component" value="Chromosome"/>
</dbReference>
<dbReference type="GO" id="GO:0008171">
    <property type="term" value="F:O-methyltransferase activity"/>
    <property type="evidence" value="ECO:0007669"/>
    <property type="project" value="InterPro"/>
</dbReference>
<dbReference type="GO" id="GO:0008757">
    <property type="term" value="F:S-adenosylmethionine-dependent methyltransferase activity"/>
    <property type="evidence" value="ECO:0007669"/>
    <property type="project" value="TreeGrafter"/>
</dbReference>
<dbReference type="GO" id="GO:0032259">
    <property type="term" value="P:methylation"/>
    <property type="evidence" value="ECO:0007669"/>
    <property type="project" value="UniProtKB-KW"/>
</dbReference>
<dbReference type="CDD" id="cd02440">
    <property type="entry name" value="AdoMet_MTases"/>
    <property type="match status" value="1"/>
</dbReference>
<dbReference type="FunFam" id="3.40.50.150:FF:000374">
    <property type="entry name" value="Putative methyltransferase"/>
    <property type="match status" value="1"/>
</dbReference>
<dbReference type="Gene3D" id="3.40.50.150">
    <property type="entry name" value="Vaccinia Virus protein VP39"/>
    <property type="match status" value="1"/>
</dbReference>
<dbReference type="InterPro" id="IPR050362">
    <property type="entry name" value="Cation-dep_OMT"/>
</dbReference>
<dbReference type="InterPro" id="IPR029063">
    <property type="entry name" value="SAM-dependent_MTases_sf"/>
</dbReference>
<dbReference type="InterPro" id="IPR002935">
    <property type="entry name" value="SAM_O-MeTrfase"/>
</dbReference>
<dbReference type="PANTHER" id="PTHR10509:SF85">
    <property type="entry name" value="O-METHYLTRANSFERASE RV1220C-RELATED"/>
    <property type="match status" value="1"/>
</dbReference>
<dbReference type="PANTHER" id="PTHR10509">
    <property type="entry name" value="O-METHYLTRANSFERASE-RELATED"/>
    <property type="match status" value="1"/>
</dbReference>
<dbReference type="Pfam" id="PF01596">
    <property type="entry name" value="Methyltransf_3"/>
    <property type="match status" value="1"/>
</dbReference>
<dbReference type="SUPFAM" id="SSF53335">
    <property type="entry name" value="S-adenosyl-L-methionine-dependent methyltransferases"/>
    <property type="match status" value="1"/>
</dbReference>
<dbReference type="PROSITE" id="PS51682">
    <property type="entry name" value="SAM_OMT_I"/>
    <property type="match status" value="1"/>
</dbReference>
<comment type="similarity">
    <text evidence="2">Belongs to the class I-like SAM-binding methyltransferase superfamily. Cation-dependent O-methyltransferase family.</text>
</comment>
<feature type="chain" id="PRO_0000380106" description="Putative O-methyltransferase MUL_4520">
    <location>
        <begin position="1"/>
        <end position="224"/>
    </location>
</feature>
<feature type="region of interest" description="Disordered" evidence="3">
    <location>
        <begin position="1"/>
        <end position="20"/>
    </location>
</feature>
<feature type="compositionally biased region" description="Polar residues" evidence="3">
    <location>
        <begin position="1"/>
        <end position="11"/>
    </location>
</feature>
<feature type="binding site" evidence="2">
    <location>
        <position position="51"/>
    </location>
    <ligand>
        <name>S-adenosyl-L-methionine</name>
        <dbReference type="ChEBI" id="CHEBI:59789"/>
    </ligand>
</feature>
<feature type="binding site" evidence="2">
    <location>
        <position position="73"/>
    </location>
    <ligand>
        <name>S-adenosyl-L-methionine</name>
        <dbReference type="ChEBI" id="CHEBI:59789"/>
    </ligand>
</feature>
<feature type="binding site" evidence="2">
    <location>
        <begin position="75"/>
        <end position="76"/>
    </location>
    <ligand>
        <name>S-adenosyl-L-methionine</name>
        <dbReference type="ChEBI" id="CHEBI:59789"/>
    </ligand>
</feature>
<feature type="binding site" evidence="2">
    <location>
        <position position="81"/>
    </location>
    <ligand>
        <name>S-adenosyl-L-methionine</name>
        <dbReference type="ChEBI" id="CHEBI:59789"/>
    </ligand>
</feature>
<feature type="binding site" evidence="2">
    <location>
        <position position="99"/>
    </location>
    <ligand>
        <name>S-adenosyl-L-methionine</name>
        <dbReference type="ChEBI" id="CHEBI:59789"/>
    </ligand>
</feature>
<feature type="binding site" evidence="2">
    <location>
        <position position="100"/>
    </location>
    <ligand>
        <name>S-adenosyl-L-methionine</name>
        <dbReference type="ChEBI" id="CHEBI:59789"/>
    </ligand>
</feature>
<feature type="binding site" evidence="1">
    <location>
        <position position="147"/>
    </location>
    <ligand>
        <name>substrate</name>
    </ligand>
</feature>
<feature type="binding site" evidence="2">
    <location>
        <position position="149"/>
    </location>
    <ligand>
        <name>S-adenosyl-L-methionine</name>
        <dbReference type="ChEBI" id="CHEBI:59789"/>
    </ligand>
</feature>
<name>Y4520_MYCUA</name>
<organism>
    <name type="scientific">Mycobacterium ulcerans (strain Agy99)</name>
    <dbReference type="NCBI Taxonomy" id="362242"/>
    <lineage>
        <taxon>Bacteria</taxon>
        <taxon>Bacillati</taxon>
        <taxon>Actinomycetota</taxon>
        <taxon>Actinomycetes</taxon>
        <taxon>Mycobacteriales</taxon>
        <taxon>Mycobacteriaceae</taxon>
        <taxon>Mycobacterium</taxon>
        <taxon>Mycobacterium ulcerans group</taxon>
    </lineage>
</organism>
<evidence type="ECO:0000250" key="1"/>
<evidence type="ECO:0000255" key="2">
    <source>
        <dbReference type="PROSITE-ProRule" id="PRU01019"/>
    </source>
</evidence>
<evidence type="ECO:0000256" key="3">
    <source>
        <dbReference type="SAM" id="MobiDB-lite"/>
    </source>
</evidence>
<sequence>MHGTDSSSDTPGQPAPSRAELLSAHAEGSISEDTILKTARDRAVDIGVGAVTPAVGALLSMLAKLSGGKAVAEVGTGAGVSGLWLLSGMSDDGVLTTIDIEPEHLRVAKQAFTEAGIGPSRTRLISGRAQEVLTRLADDSYDLVFVDADPIDQPDYVVEGVRLLRSGGVIVVHRAALGDRAGDPAVRDAEVTAVREAARLIAEDERLTPALVPLGDGVLAAVRD</sequence>
<proteinExistence type="inferred from homology"/>
<keyword id="KW-0489">Methyltransferase</keyword>
<keyword id="KW-0949">S-adenosyl-L-methionine</keyword>
<keyword id="KW-0808">Transferase</keyword>
<gene>
    <name type="ordered locus">MUL_4520</name>
</gene>
<reference key="1">
    <citation type="journal article" date="2007" name="Genome Res.">
        <title>Reductive evolution and niche adaptation inferred from the genome of Mycobacterium ulcerans, the causative agent of Buruli ulcer.</title>
        <authorList>
            <person name="Stinear T.P."/>
            <person name="Seemann T."/>
            <person name="Pidot S."/>
            <person name="Frigui W."/>
            <person name="Reysset G."/>
            <person name="Garnier T."/>
            <person name="Meurice G."/>
            <person name="Simon D."/>
            <person name="Bouchier C."/>
            <person name="Ma L."/>
            <person name="Tichit M."/>
            <person name="Porter J.L."/>
            <person name="Ryan J."/>
            <person name="Johnson P.D.R."/>
            <person name="Davies J.K."/>
            <person name="Jenkin G.A."/>
            <person name="Small P.L.C."/>
            <person name="Jones L.M."/>
            <person name="Tekaia F."/>
            <person name="Laval F."/>
            <person name="Daffe M."/>
            <person name="Parkhill J."/>
            <person name="Cole S.T."/>
        </authorList>
    </citation>
    <scope>NUCLEOTIDE SEQUENCE [LARGE SCALE GENOMIC DNA]</scope>
    <source>
        <strain>Agy99</strain>
    </source>
</reference>
<accession>A0PVW4</accession>